<comment type="function">
    <text evidence="1">Conversion of glycerol 3-phosphate to dihydroxyacetone. Uses fumarate or nitrate as electron acceptor.</text>
</comment>
<comment type="catalytic activity">
    <reaction evidence="1">
        <text>a quinone + sn-glycerol 3-phosphate = dihydroxyacetone phosphate + a quinol</text>
        <dbReference type="Rhea" id="RHEA:18977"/>
        <dbReference type="ChEBI" id="CHEBI:24646"/>
        <dbReference type="ChEBI" id="CHEBI:57597"/>
        <dbReference type="ChEBI" id="CHEBI:57642"/>
        <dbReference type="ChEBI" id="CHEBI:132124"/>
        <dbReference type="EC" id="1.1.5.3"/>
    </reaction>
</comment>
<comment type="cofactor">
    <cofactor evidence="1">
        <name>FMN</name>
        <dbReference type="ChEBI" id="CHEBI:58210"/>
    </cofactor>
</comment>
<comment type="pathway">
    <text evidence="1">Polyol metabolism; glycerol degradation via glycerol kinase pathway; glycerone phosphate from sn-glycerol 3-phosphate (anaerobic route): step 1/1.</text>
</comment>
<comment type="subunit">
    <text evidence="1">Composed of a catalytic GlpA/B dimer and of membrane bound GlpC.</text>
</comment>
<comment type="similarity">
    <text evidence="1">Belongs to the anaerobic G-3-P dehydrogenase subunit B family.</text>
</comment>
<keyword id="KW-0285">Flavoprotein</keyword>
<keyword id="KW-0288">FMN</keyword>
<keyword id="KW-0560">Oxidoreductase</keyword>
<name>GLPB_SALPK</name>
<organism>
    <name type="scientific">Salmonella paratyphi A (strain AKU_12601)</name>
    <dbReference type="NCBI Taxonomy" id="554290"/>
    <lineage>
        <taxon>Bacteria</taxon>
        <taxon>Pseudomonadati</taxon>
        <taxon>Pseudomonadota</taxon>
        <taxon>Gammaproteobacteria</taxon>
        <taxon>Enterobacterales</taxon>
        <taxon>Enterobacteriaceae</taxon>
        <taxon>Salmonella</taxon>
    </lineage>
</organism>
<dbReference type="EC" id="1.1.5.3" evidence="1"/>
<dbReference type="EMBL" id="FM200053">
    <property type="protein sequence ID" value="CAR58672.1"/>
    <property type="molecule type" value="Genomic_DNA"/>
</dbReference>
<dbReference type="RefSeq" id="WP_000667146.1">
    <property type="nucleotide sequence ID" value="NC_011147.1"/>
</dbReference>
<dbReference type="KEGG" id="sek:SSPA0544"/>
<dbReference type="HOGENOM" id="CLU_047793_0_0_6"/>
<dbReference type="UniPathway" id="UPA00618">
    <property type="reaction ID" value="UER00673"/>
</dbReference>
<dbReference type="Proteomes" id="UP000001869">
    <property type="component" value="Chromosome"/>
</dbReference>
<dbReference type="GO" id="GO:0009331">
    <property type="term" value="C:glycerol-3-phosphate dehydrogenase (FAD) complex"/>
    <property type="evidence" value="ECO:0007669"/>
    <property type="project" value="InterPro"/>
</dbReference>
<dbReference type="GO" id="GO:0004368">
    <property type="term" value="F:glycerol-3-phosphate dehydrogenase (quinone) activity"/>
    <property type="evidence" value="ECO:0007669"/>
    <property type="project" value="UniProtKB-UniRule"/>
</dbReference>
<dbReference type="GO" id="GO:0009061">
    <property type="term" value="P:anaerobic respiration"/>
    <property type="evidence" value="ECO:0007669"/>
    <property type="project" value="TreeGrafter"/>
</dbReference>
<dbReference type="GO" id="GO:0019563">
    <property type="term" value="P:glycerol catabolic process"/>
    <property type="evidence" value="ECO:0007669"/>
    <property type="project" value="UniProtKB-UniRule"/>
</dbReference>
<dbReference type="GO" id="GO:0046168">
    <property type="term" value="P:glycerol-3-phosphate catabolic process"/>
    <property type="evidence" value="ECO:0007669"/>
    <property type="project" value="TreeGrafter"/>
</dbReference>
<dbReference type="FunFam" id="3.50.50.60:FF:000125">
    <property type="entry name" value="Anaerobic glycerol-3-phosphate dehydrogenase subunit B"/>
    <property type="match status" value="1"/>
</dbReference>
<dbReference type="Gene3D" id="3.50.50.60">
    <property type="entry name" value="FAD/NAD(P)-binding domain"/>
    <property type="match status" value="1"/>
</dbReference>
<dbReference type="HAMAP" id="MF_00753">
    <property type="entry name" value="Glycerol3P_GlpB"/>
    <property type="match status" value="1"/>
</dbReference>
<dbReference type="InterPro" id="IPR003953">
    <property type="entry name" value="FAD-dep_OxRdtase_2_FAD-bd"/>
</dbReference>
<dbReference type="InterPro" id="IPR050315">
    <property type="entry name" value="FAD-oxidoreductase_2"/>
</dbReference>
<dbReference type="InterPro" id="IPR036188">
    <property type="entry name" value="FAD/NAD-bd_sf"/>
</dbReference>
<dbReference type="InterPro" id="IPR009158">
    <property type="entry name" value="G3P_DH_GlpB_su"/>
</dbReference>
<dbReference type="NCBIfam" id="TIGR03378">
    <property type="entry name" value="glycerol3P_GlpB"/>
    <property type="match status" value="1"/>
</dbReference>
<dbReference type="NCBIfam" id="NF003718">
    <property type="entry name" value="PRK05329.1-1"/>
    <property type="match status" value="1"/>
</dbReference>
<dbReference type="NCBIfam" id="NF003719">
    <property type="entry name" value="PRK05329.1-2"/>
    <property type="match status" value="1"/>
</dbReference>
<dbReference type="NCBIfam" id="NF003720">
    <property type="entry name" value="PRK05329.1-3"/>
    <property type="match status" value="1"/>
</dbReference>
<dbReference type="PANTHER" id="PTHR43400:SF11">
    <property type="entry name" value="ANAEROBIC GLYCEROL-3-PHOSPHATE DEHYDROGENASE SUBUNIT B"/>
    <property type="match status" value="1"/>
</dbReference>
<dbReference type="PANTHER" id="PTHR43400">
    <property type="entry name" value="FUMARATE REDUCTASE"/>
    <property type="match status" value="1"/>
</dbReference>
<dbReference type="Pfam" id="PF00890">
    <property type="entry name" value="FAD_binding_2"/>
    <property type="match status" value="1"/>
</dbReference>
<dbReference type="PIRSF" id="PIRSF000141">
    <property type="entry name" value="Anaerobic_G3P_dh"/>
    <property type="match status" value="1"/>
</dbReference>
<dbReference type="SUPFAM" id="SSF51905">
    <property type="entry name" value="FAD/NAD(P)-binding domain"/>
    <property type="match status" value="1"/>
</dbReference>
<sequence length="419" mass="45671">MKFDTVIMGGGLAGLLCGLQLQQHGLRCAIVTRGQSALHFSSGSLDLLSALPDGQPVTDITAGLDALCRQAPEHPYSRLGAQKVLTLAQQAQTLLNASGAQLYGDVQQAHQRVTPLGTLRSTWLSSPEVPVWPLSAQRICVVGVSGLLDFQAHLAAASLRQRDLNVETAEIDLPELDVLRDNPTEFRAVNIARLLDNEEKWPLLYDALSPIATNCDMIIMPACFGLANDTLWRWLNERLPCALTLLPTLPPSVLGIRLHNQLQRQFVRQGGIWMPGDEVKKVTCRRGTVSEIWTRNHADIPLRPRFAVLASGSFFSSGLVAEREGIREPILGLDVQQTATRAEWYQQHFFDPQPWQQFGVVTDDAFRPSLAGNTVENLYAIGSVLAGFDPIAEGCGGGVCAVSALQAAHHIAERAGEQQ</sequence>
<feature type="chain" id="PRO_1000133373" description="Anaerobic glycerol-3-phosphate dehydrogenase subunit B">
    <location>
        <begin position="1"/>
        <end position="419"/>
    </location>
</feature>
<protein>
    <recommendedName>
        <fullName evidence="1">Anaerobic glycerol-3-phosphate dehydrogenase subunit B</fullName>
        <shortName evidence="1">Anaerobic G-3-P dehydrogenase subunit B</shortName>
        <shortName evidence="1">Anaerobic G3Pdhase B</shortName>
        <ecNumber evidence="1">1.1.5.3</ecNumber>
    </recommendedName>
</protein>
<gene>
    <name evidence="1" type="primary">glpB</name>
    <name type="ordered locus">SSPA0544</name>
</gene>
<evidence type="ECO:0000255" key="1">
    <source>
        <dbReference type="HAMAP-Rule" id="MF_00753"/>
    </source>
</evidence>
<proteinExistence type="inferred from homology"/>
<accession>B5BCR1</accession>
<reference key="1">
    <citation type="journal article" date="2009" name="BMC Genomics">
        <title>Pseudogene accumulation in the evolutionary histories of Salmonella enterica serovars Paratyphi A and Typhi.</title>
        <authorList>
            <person name="Holt K.E."/>
            <person name="Thomson N.R."/>
            <person name="Wain J."/>
            <person name="Langridge G.C."/>
            <person name="Hasan R."/>
            <person name="Bhutta Z.A."/>
            <person name="Quail M.A."/>
            <person name="Norbertczak H."/>
            <person name="Walker D."/>
            <person name="Simmonds M."/>
            <person name="White B."/>
            <person name="Bason N."/>
            <person name="Mungall K."/>
            <person name="Dougan G."/>
            <person name="Parkhill J."/>
        </authorList>
    </citation>
    <scope>NUCLEOTIDE SEQUENCE [LARGE SCALE GENOMIC DNA]</scope>
    <source>
        <strain>AKU_12601</strain>
    </source>
</reference>